<evidence type="ECO:0000255" key="1">
    <source>
        <dbReference type="HAMAP-Rule" id="MF_00402"/>
    </source>
</evidence>
<evidence type="ECO:0000256" key="2">
    <source>
        <dbReference type="SAM" id="MobiDB-lite"/>
    </source>
</evidence>
<evidence type="ECO:0000305" key="3"/>
<reference key="1">
    <citation type="journal article" date="2011" name="Stand. Genomic Sci.">
        <title>Complete genome sequence of Rhodospirillum rubrum type strain (S1).</title>
        <authorList>
            <person name="Munk A.C."/>
            <person name="Copeland A."/>
            <person name="Lucas S."/>
            <person name="Lapidus A."/>
            <person name="Del Rio T.G."/>
            <person name="Barry K."/>
            <person name="Detter J.C."/>
            <person name="Hammon N."/>
            <person name="Israni S."/>
            <person name="Pitluck S."/>
            <person name="Brettin T."/>
            <person name="Bruce D."/>
            <person name="Han C."/>
            <person name="Tapia R."/>
            <person name="Gilna P."/>
            <person name="Schmutz J."/>
            <person name="Larimer F."/>
            <person name="Land M."/>
            <person name="Kyrpides N.C."/>
            <person name="Mavromatis K."/>
            <person name="Richardson P."/>
            <person name="Rohde M."/>
            <person name="Goeker M."/>
            <person name="Klenk H.P."/>
            <person name="Zhang Y."/>
            <person name="Roberts G.P."/>
            <person name="Reslewic S."/>
            <person name="Schwartz D.C."/>
        </authorList>
    </citation>
    <scope>NUCLEOTIDE SEQUENCE [LARGE SCALE GENOMIC DNA]</scope>
    <source>
        <strain>ATCC 11170 / ATH 1.1.1 / DSM 467 / LMG 4362 / NCIMB 8255 / S1</strain>
    </source>
</reference>
<feature type="chain" id="PRO_0000252537" description="Large ribosomal subunit protein bL19">
    <location>
        <begin position="1"/>
        <end position="163"/>
    </location>
</feature>
<feature type="region of interest" description="Disordered" evidence="2">
    <location>
        <begin position="131"/>
        <end position="163"/>
    </location>
</feature>
<feature type="compositionally biased region" description="Basic and acidic residues" evidence="2">
    <location>
        <begin position="131"/>
        <end position="150"/>
    </location>
</feature>
<feature type="compositionally biased region" description="Basic residues" evidence="2">
    <location>
        <begin position="151"/>
        <end position="163"/>
    </location>
</feature>
<keyword id="KW-1185">Reference proteome</keyword>
<keyword id="KW-0687">Ribonucleoprotein</keyword>
<keyword id="KW-0689">Ribosomal protein</keyword>
<proteinExistence type="inferred from homology"/>
<comment type="function">
    <text evidence="1">This protein is located at the 30S-50S ribosomal subunit interface and may play a role in the structure and function of the aminoacyl-tRNA binding site.</text>
</comment>
<comment type="similarity">
    <text evidence="1">Belongs to the bacterial ribosomal protein bL19 family.</text>
</comment>
<organism>
    <name type="scientific">Rhodospirillum rubrum (strain ATCC 11170 / ATH 1.1.1 / DSM 467 / LMG 4362 / NCIMB 8255 / S1)</name>
    <dbReference type="NCBI Taxonomy" id="269796"/>
    <lineage>
        <taxon>Bacteria</taxon>
        <taxon>Pseudomonadati</taxon>
        <taxon>Pseudomonadota</taxon>
        <taxon>Alphaproteobacteria</taxon>
        <taxon>Rhodospirillales</taxon>
        <taxon>Rhodospirillaceae</taxon>
        <taxon>Rhodospirillum</taxon>
    </lineage>
</organism>
<protein>
    <recommendedName>
        <fullName evidence="1">Large ribosomal subunit protein bL19</fullName>
    </recommendedName>
    <alternativeName>
        <fullName evidence="3">50S ribosomal protein L19</fullName>
    </alternativeName>
</protein>
<dbReference type="EMBL" id="CP000230">
    <property type="protein sequence ID" value="ABC21989.1"/>
    <property type="molecule type" value="Genomic_DNA"/>
</dbReference>
<dbReference type="RefSeq" id="WP_011388943.1">
    <property type="nucleotide sequence ID" value="NC_007643.1"/>
</dbReference>
<dbReference type="RefSeq" id="YP_426276.1">
    <property type="nucleotide sequence ID" value="NC_007643.1"/>
</dbReference>
<dbReference type="SMR" id="Q2RV56"/>
<dbReference type="STRING" id="269796.Rru_A1188"/>
<dbReference type="EnsemblBacteria" id="ABC21989">
    <property type="protein sequence ID" value="ABC21989"/>
    <property type="gene ID" value="Rru_A1188"/>
</dbReference>
<dbReference type="KEGG" id="rru:Rru_A1188"/>
<dbReference type="PATRIC" id="fig|269796.9.peg.1252"/>
<dbReference type="eggNOG" id="COG0335">
    <property type="taxonomic scope" value="Bacteria"/>
</dbReference>
<dbReference type="HOGENOM" id="CLU_103507_0_2_5"/>
<dbReference type="PhylomeDB" id="Q2RV56"/>
<dbReference type="Proteomes" id="UP000001929">
    <property type="component" value="Chromosome"/>
</dbReference>
<dbReference type="GO" id="GO:0022625">
    <property type="term" value="C:cytosolic large ribosomal subunit"/>
    <property type="evidence" value="ECO:0007669"/>
    <property type="project" value="TreeGrafter"/>
</dbReference>
<dbReference type="GO" id="GO:0003735">
    <property type="term" value="F:structural constituent of ribosome"/>
    <property type="evidence" value="ECO:0007669"/>
    <property type="project" value="InterPro"/>
</dbReference>
<dbReference type="GO" id="GO:0006412">
    <property type="term" value="P:translation"/>
    <property type="evidence" value="ECO:0007669"/>
    <property type="project" value="UniProtKB-UniRule"/>
</dbReference>
<dbReference type="FunFam" id="2.30.30.790:FF:000001">
    <property type="entry name" value="50S ribosomal protein L19"/>
    <property type="match status" value="1"/>
</dbReference>
<dbReference type="Gene3D" id="2.30.30.790">
    <property type="match status" value="1"/>
</dbReference>
<dbReference type="HAMAP" id="MF_00402">
    <property type="entry name" value="Ribosomal_bL19"/>
    <property type="match status" value="1"/>
</dbReference>
<dbReference type="InterPro" id="IPR001857">
    <property type="entry name" value="Ribosomal_bL19"/>
</dbReference>
<dbReference type="InterPro" id="IPR018257">
    <property type="entry name" value="Ribosomal_bL19_CS"/>
</dbReference>
<dbReference type="InterPro" id="IPR038657">
    <property type="entry name" value="Ribosomal_bL19_sf"/>
</dbReference>
<dbReference type="InterPro" id="IPR008991">
    <property type="entry name" value="Translation_prot_SH3-like_sf"/>
</dbReference>
<dbReference type="NCBIfam" id="TIGR01024">
    <property type="entry name" value="rplS_bact"/>
    <property type="match status" value="1"/>
</dbReference>
<dbReference type="PANTHER" id="PTHR15680:SF9">
    <property type="entry name" value="LARGE RIBOSOMAL SUBUNIT PROTEIN BL19M"/>
    <property type="match status" value="1"/>
</dbReference>
<dbReference type="PANTHER" id="PTHR15680">
    <property type="entry name" value="RIBOSOMAL PROTEIN L19"/>
    <property type="match status" value="1"/>
</dbReference>
<dbReference type="Pfam" id="PF01245">
    <property type="entry name" value="Ribosomal_L19"/>
    <property type="match status" value="1"/>
</dbReference>
<dbReference type="PRINTS" id="PR00061">
    <property type="entry name" value="RIBOSOMALL19"/>
</dbReference>
<dbReference type="SUPFAM" id="SSF50104">
    <property type="entry name" value="Translation proteins SH3-like domain"/>
    <property type="match status" value="1"/>
</dbReference>
<dbReference type="PROSITE" id="PS01015">
    <property type="entry name" value="RIBOSOMAL_L19"/>
    <property type="match status" value="1"/>
</dbReference>
<gene>
    <name evidence="1" type="primary">rplS</name>
    <name type="ordered locus">Rru_A1188</name>
</gene>
<sequence>MNIIEQFEKEQIEKLLEQRGVPQFSPGDTLRVHVKVIEGNRQRVQVYEGVCIARRNAALNSSFTVRKISFGEGVERIFPLYAPTIDRIEVVRRGKVRRAKLYYLRGRQGRSARIIEDTTATQQALAVEREISQERKASGKDQASKPEVRPQGKKPAPKPKAKK</sequence>
<name>RL19_RHORT</name>
<accession>Q2RV56</accession>